<evidence type="ECO:0000255" key="1">
    <source>
        <dbReference type="HAMAP-Rule" id="MF_00181"/>
    </source>
</evidence>
<protein>
    <recommendedName>
        <fullName evidence="1">Probable cytosol aminopeptidase</fullName>
        <ecNumber evidence="1">3.4.11.1</ecNumber>
    </recommendedName>
    <alternativeName>
        <fullName evidence="1">Leucine aminopeptidase</fullName>
        <shortName evidence="1">LAP</shortName>
        <ecNumber evidence="1">3.4.11.10</ecNumber>
    </alternativeName>
    <alternativeName>
        <fullName evidence="1">Leucyl aminopeptidase</fullName>
    </alternativeName>
</protein>
<accession>Q9A7M9</accession>
<organism>
    <name type="scientific">Caulobacter vibrioides (strain ATCC 19089 / CIP 103742 / CB 15)</name>
    <name type="common">Caulobacter crescentus</name>
    <dbReference type="NCBI Taxonomy" id="190650"/>
    <lineage>
        <taxon>Bacteria</taxon>
        <taxon>Pseudomonadati</taxon>
        <taxon>Pseudomonadota</taxon>
        <taxon>Alphaproteobacteria</taxon>
        <taxon>Caulobacterales</taxon>
        <taxon>Caulobacteraceae</taxon>
        <taxon>Caulobacter</taxon>
    </lineage>
</organism>
<proteinExistence type="inferred from homology"/>
<reference key="1">
    <citation type="journal article" date="2001" name="Proc. Natl. Acad. Sci. U.S.A.">
        <title>Complete genome sequence of Caulobacter crescentus.</title>
        <authorList>
            <person name="Nierman W.C."/>
            <person name="Feldblyum T.V."/>
            <person name="Laub M.T."/>
            <person name="Paulsen I.T."/>
            <person name="Nelson K.E."/>
            <person name="Eisen J.A."/>
            <person name="Heidelberg J.F."/>
            <person name="Alley M.R.K."/>
            <person name="Ohta N."/>
            <person name="Maddock J.R."/>
            <person name="Potocka I."/>
            <person name="Nelson W.C."/>
            <person name="Newton A."/>
            <person name="Stephens C."/>
            <person name="Phadke N.D."/>
            <person name="Ely B."/>
            <person name="DeBoy R.T."/>
            <person name="Dodson R.J."/>
            <person name="Durkin A.S."/>
            <person name="Gwinn M.L."/>
            <person name="Haft D.H."/>
            <person name="Kolonay J.F."/>
            <person name="Smit J."/>
            <person name="Craven M.B."/>
            <person name="Khouri H.M."/>
            <person name="Shetty J."/>
            <person name="Berry K.J."/>
            <person name="Utterback T.R."/>
            <person name="Tran K."/>
            <person name="Wolf A.M."/>
            <person name="Vamathevan J.J."/>
            <person name="Ermolaeva M.D."/>
            <person name="White O."/>
            <person name="Salzberg S.L."/>
            <person name="Venter J.C."/>
            <person name="Shapiro L."/>
            <person name="Fraser C.M."/>
        </authorList>
    </citation>
    <scope>NUCLEOTIDE SEQUENCE [LARGE SCALE GENOMIC DNA]</scope>
    <source>
        <strain>ATCC 19089 / CIP 103742 / CB 15</strain>
    </source>
</reference>
<dbReference type="EC" id="3.4.11.1" evidence="1"/>
<dbReference type="EC" id="3.4.11.10" evidence="1"/>
<dbReference type="EMBL" id="AE005673">
    <property type="protein sequence ID" value="AAK23669.1"/>
    <property type="molecule type" value="Genomic_DNA"/>
</dbReference>
<dbReference type="PIR" id="A87459">
    <property type="entry name" value="A87459"/>
</dbReference>
<dbReference type="RefSeq" id="NP_420501.1">
    <property type="nucleotide sequence ID" value="NC_002696.2"/>
</dbReference>
<dbReference type="RefSeq" id="WP_010919562.1">
    <property type="nucleotide sequence ID" value="NC_002696.2"/>
</dbReference>
<dbReference type="SMR" id="Q9A7M9"/>
<dbReference type="STRING" id="190650.CC_1692"/>
<dbReference type="MEROPS" id="M17.003"/>
<dbReference type="EnsemblBacteria" id="AAK23669">
    <property type="protein sequence ID" value="AAK23669"/>
    <property type="gene ID" value="CC_1692"/>
</dbReference>
<dbReference type="KEGG" id="ccr:CC_1692"/>
<dbReference type="PATRIC" id="fig|190650.5.peg.1720"/>
<dbReference type="eggNOG" id="COG0260">
    <property type="taxonomic scope" value="Bacteria"/>
</dbReference>
<dbReference type="HOGENOM" id="CLU_013734_6_0_5"/>
<dbReference type="BioCyc" id="CAULO:CC1692-MONOMER"/>
<dbReference type="Proteomes" id="UP000001816">
    <property type="component" value="Chromosome"/>
</dbReference>
<dbReference type="GO" id="GO:0005737">
    <property type="term" value="C:cytoplasm"/>
    <property type="evidence" value="ECO:0007669"/>
    <property type="project" value="UniProtKB-SubCell"/>
</dbReference>
<dbReference type="GO" id="GO:0030145">
    <property type="term" value="F:manganese ion binding"/>
    <property type="evidence" value="ECO:0007669"/>
    <property type="project" value="UniProtKB-UniRule"/>
</dbReference>
<dbReference type="GO" id="GO:0070006">
    <property type="term" value="F:metalloaminopeptidase activity"/>
    <property type="evidence" value="ECO:0007669"/>
    <property type="project" value="InterPro"/>
</dbReference>
<dbReference type="GO" id="GO:0006508">
    <property type="term" value="P:proteolysis"/>
    <property type="evidence" value="ECO:0007669"/>
    <property type="project" value="UniProtKB-KW"/>
</dbReference>
<dbReference type="CDD" id="cd00433">
    <property type="entry name" value="Peptidase_M17"/>
    <property type="match status" value="1"/>
</dbReference>
<dbReference type="Gene3D" id="3.40.220.10">
    <property type="entry name" value="Leucine Aminopeptidase, subunit E, domain 1"/>
    <property type="match status" value="1"/>
</dbReference>
<dbReference type="Gene3D" id="3.40.630.10">
    <property type="entry name" value="Zn peptidases"/>
    <property type="match status" value="1"/>
</dbReference>
<dbReference type="HAMAP" id="MF_00181">
    <property type="entry name" value="Cytosol_peptidase_M17"/>
    <property type="match status" value="1"/>
</dbReference>
<dbReference type="InterPro" id="IPR011356">
    <property type="entry name" value="Leucine_aapep/pepB"/>
</dbReference>
<dbReference type="InterPro" id="IPR043472">
    <property type="entry name" value="Macro_dom-like"/>
</dbReference>
<dbReference type="InterPro" id="IPR000819">
    <property type="entry name" value="Peptidase_M17_C"/>
</dbReference>
<dbReference type="InterPro" id="IPR023042">
    <property type="entry name" value="Peptidase_M17_leu_NH2_pept"/>
</dbReference>
<dbReference type="InterPro" id="IPR008283">
    <property type="entry name" value="Peptidase_M17_N"/>
</dbReference>
<dbReference type="NCBIfam" id="NF002073">
    <property type="entry name" value="PRK00913.1-2"/>
    <property type="match status" value="1"/>
</dbReference>
<dbReference type="NCBIfam" id="NF002074">
    <property type="entry name" value="PRK00913.1-4"/>
    <property type="match status" value="1"/>
</dbReference>
<dbReference type="NCBIfam" id="NF002075">
    <property type="entry name" value="PRK00913.2-2"/>
    <property type="match status" value="1"/>
</dbReference>
<dbReference type="NCBIfam" id="NF002077">
    <property type="entry name" value="PRK00913.2-4"/>
    <property type="match status" value="1"/>
</dbReference>
<dbReference type="PANTHER" id="PTHR11963:SF23">
    <property type="entry name" value="CYTOSOL AMINOPEPTIDASE"/>
    <property type="match status" value="1"/>
</dbReference>
<dbReference type="PANTHER" id="PTHR11963">
    <property type="entry name" value="LEUCINE AMINOPEPTIDASE-RELATED"/>
    <property type="match status" value="1"/>
</dbReference>
<dbReference type="Pfam" id="PF00883">
    <property type="entry name" value="Peptidase_M17"/>
    <property type="match status" value="1"/>
</dbReference>
<dbReference type="Pfam" id="PF02789">
    <property type="entry name" value="Peptidase_M17_N"/>
    <property type="match status" value="1"/>
</dbReference>
<dbReference type="PRINTS" id="PR00481">
    <property type="entry name" value="LAMNOPPTDASE"/>
</dbReference>
<dbReference type="SUPFAM" id="SSF52949">
    <property type="entry name" value="Macro domain-like"/>
    <property type="match status" value="1"/>
</dbReference>
<dbReference type="SUPFAM" id="SSF53187">
    <property type="entry name" value="Zn-dependent exopeptidases"/>
    <property type="match status" value="1"/>
</dbReference>
<dbReference type="PROSITE" id="PS00631">
    <property type="entry name" value="CYTOSOL_AP"/>
    <property type="match status" value="1"/>
</dbReference>
<comment type="function">
    <text evidence="1">Presumably involved in the processing and regular turnover of intracellular proteins. Catalyzes the removal of unsubstituted N-terminal amino acids from various peptides.</text>
</comment>
<comment type="catalytic activity">
    <reaction evidence="1">
        <text>Release of an N-terminal amino acid, Xaa-|-Yaa-, in which Xaa is preferably Leu, but may be other amino acids including Pro although not Arg or Lys, and Yaa may be Pro. Amino acid amides and methyl esters are also readily hydrolyzed, but rates on arylamides are exceedingly low.</text>
        <dbReference type="EC" id="3.4.11.1"/>
    </reaction>
</comment>
<comment type="catalytic activity">
    <reaction evidence="1">
        <text>Release of an N-terminal amino acid, preferentially leucine, but not glutamic or aspartic acids.</text>
        <dbReference type="EC" id="3.4.11.10"/>
    </reaction>
</comment>
<comment type="cofactor">
    <cofactor evidence="1">
        <name>Mn(2+)</name>
        <dbReference type="ChEBI" id="CHEBI:29035"/>
    </cofactor>
    <text evidence="1">Binds 2 manganese ions per subunit.</text>
</comment>
<comment type="subcellular location">
    <subcellularLocation>
        <location evidence="1">Cytoplasm</location>
    </subcellularLocation>
</comment>
<comment type="similarity">
    <text evidence="1">Belongs to the peptidase M17 family.</text>
</comment>
<keyword id="KW-0031">Aminopeptidase</keyword>
<keyword id="KW-0963">Cytoplasm</keyword>
<keyword id="KW-0378">Hydrolase</keyword>
<keyword id="KW-0464">Manganese</keyword>
<keyword id="KW-0479">Metal-binding</keyword>
<keyword id="KW-0645">Protease</keyword>
<keyword id="KW-1185">Reference proteome</keyword>
<sequence>MRIEFVPVDTQAGATAALAVLAHEGAALSPEARAANEATGGALARAIAGGRFTGAKGQTLDIVAPNGLEAARVVLVGVDGSGAVEPEAVELAAASAFQAVKTSGVVELVLKLGADAETAARAAFGARLAAYRFDKYRTTEKAEKKPSVQVVKIAAADPVKAQKAYEPLAALADAIVFSRNLVSEPANILHPEEFAARAKGLESLGLEVEILGEAEMAKLGMGSLLGVGQGSVRESQLVIMKWMGAADKSAQPIAFVGKGVCFDTGGISIKPADGMEDMKWDMGGAAAVAGVMHALAGRKAKVNAIGVLGLVENMPDGNAQRPGDVVTSMSGQTIEVINTDAEGRLVLADALWYTQERFKPQFMIDLATLTGAIIISLGHDYAGLFSNNDGLSEKLLAAGKAERESLWRLPLPAAYEKQIESPIADMKNIGGRPAGSITAGLFLQKFVNGVPWAHLDIASVAWKKPSADPTVPDGAVGYGVRLLNRLVADAYEG</sequence>
<feature type="chain" id="PRO_0000165736" description="Probable cytosol aminopeptidase">
    <location>
        <begin position="1"/>
        <end position="493"/>
    </location>
</feature>
<feature type="active site" evidence="1">
    <location>
        <position position="270"/>
    </location>
</feature>
<feature type="active site" evidence="1">
    <location>
        <position position="344"/>
    </location>
</feature>
<feature type="binding site" evidence="1">
    <location>
        <position position="258"/>
    </location>
    <ligand>
        <name>Mn(2+)</name>
        <dbReference type="ChEBI" id="CHEBI:29035"/>
        <label>2</label>
    </ligand>
</feature>
<feature type="binding site" evidence="1">
    <location>
        <position position="263"/>
    </location>
    <ligand>
        <name>Mn(2+)</name>
        <dbReference type="ChEBI" id="CHEBI:29035"/>
        <label>1</label>
    </ligand>
</feature>
<feature type="binding site" evidence="1">
    <location>
        <position position="263"/>
    </location>
    <ligand>
        <name>Mn(2+)</name>
        <dbReference type="ChEBI" id="CHEBI:29035"/>
        <label>2</label>
    </ligand>
</feature>
<feature type="binding site" evidence="1">
    <location>
        <position position="281"/>
    </location>
    <ligand>
        <name>Mn(2+)</name>
        <dbReference type="ChEBI" id="CHEBI:29035"/>
        <label>2</label>
    </ligand>
</feature>
<feature type="binding site" evidence="1">
    <location>
        <position position="340"/>
    </location>
    <ligand>
        <name>Mn(2+)</name>
        <dbReference type="ChEBI" id="CHEBI:29035"/>
        <label>1</label>
    </ligand>
</feature>
<feature type="binding site" evidence="1">
    <location>
        <position position="342"/>
    </location>
    <ligand>
        <name>Mn(2+)</name>
        <dbReference type="ChEBI" id="CHEBI:29035"/>
        <label>1</label>
    </ligand>
</feature>
<feature type="binding site" evidence="1">
    <location>
        <position position="342"/>
    </location>
    <ligand>
        <name>Mn(2+)</name>
        <dbReference type="ChEBI" id="CHEBI:29035"/>
        <label>2</label>
    </ligand>
</feature>
<gene>
    <name evidence="1" type="primary">pepA</name>
    <name type="ordered locus">CC_1692</name>
</gene>
<name>AMPA_CAUVC</name>